<evidence type="ECO:0000255" key="1">
    <source>
        <dbReference type="HAMAP-Rule" id="MF_01074"/>
    </source>
</evidence>
<evidence type="ECO:0000269" key="2">
    <source>
    </source>
</evidence>
<evidence type="ECO:0000269" key="3">
    <source>
    </source>
</evidence>
<evidence type="ECO:0000269" key="4">
    <source>
    </source>
</evidence>
<evidence type="ECO:0000303" key="5">
    <source>
    </source>
</evidence>
<evidence type="ECO:0000305" key="6"/>
<evidence type="ECO:0000305" key="7">
    <source>
    </source>
</evidence>
<evidence type="ECO:0000312" key="8">
    <source>
        <dbReference type="EMBL" id="CCC77662.1"/>
    </source>
</evidence>
<evidence type="ECO:0000312" key="9">
    <source>
        <dbReference type="EMBL" id="CCC77663.1"/>
    </source>
</evidence>
<evidence type="ECO:0007829" key="10">
    <source>
        <dbReference type="PDB" id="6BWR"/>
    </source>
</evidence>
<keyword id="KW-0002">3D-structure</keyword>
<keyword id="KW-0456">Lyase</keyword>
<keyword id="KW-0533">Nickel</keyword>
<keyword id="KW-1185">Reference proteome</keyword>
<keyword id="KW-0688">Ribosomal frameshifting</keyword>
<dbReference type="EC" id="4.99.1.12" evidence="3 4"/>
<dbReference type="EMBL" id="AL935263">
    <property type="protein sequence ID" value="CCC77662.1"/>
    <property type="status" value="ALT_FRAME"/>
    <property type="molecule type" value="Genomic_DNA"/>
</dbReference>
<dbReference type="EMBL" id="AL935263">
    <property type="protein sequence ID" value="CCC77663.1"/>
    <property type="status" value="ALT_FRAME"/>
    <property type="molecule type" value="Genomic_DNA"/>
</dbReference>
<dbReference type="RefSeq" id="YP_004888176.1">
    <property type="nucleotide sequence ID" value="NC_004567.2"/>
</dbReference>
<dbReference type="RefSeq" id="YP_004888177.1">
    <property type="nucleotide sequence ID" value="NC_004567.2"/>
</dbReference>
<dbReference type="PDB" id="6BWO">
    <property type="method" value="X-ray"/>
    <property type="resolution" value="2.03 A"/>
    <property type="chains" value="A/B=272-420"/>
</dbReference>
<dbReference type="PDB" id="6BWQ">
    <property type="method" value="X-ray"/>
    <property type="resolution" value="1.85 A"/>
    <property type="chains" value="A/B=272-420"/>
</dbReference>
<dbReference type="PDB" id="6BWR">
    <property type="method" value="X-ray"/>
    <property type="resolution" value="1.81 A"/>
    <property type="chains" value="A/B=272-420"/>
</dbReference>
<dbReference type="PDBsum" id="6BWO"/>
<dbReference type="PDBsum" id="6BWQ"/>
<dbReference type="PDBsum" id="6BWR"/>
<dbReference type="SMR" id="F9UST1"/>
<dbReference type="STRING" id="220668.lp_0106"/>
<dbReference type="EnsemblBacteria" id="CCC77662">
    <property type="protein sequence ID" value="CCC77662"/>
    <property type="gene ID" value="lp_0106"/>
</dbReference>
<dbReference type="EnsemblBacteria" id="CCC77663">
    <property type="protein sequence ID" value="CCC77663"/>
    <property type="gene ID" value="lp_0107"/>
</dbReference>
<dbReference type="KEGG" id="lpl:lp_0106"/>
<dbReference type="KEGG" id="lpl:lp_0107"/>
<dbReference type="eggNOG" id="COG1641">
    <property type="taxonomic scope" value="Bacteria"/>
</dbReference>
<dbReference type="HOGENOM" id="CLU_028523_1_0_9"/>
<dbReference type="OMA" id="DMFIGAL"/>
<dbReference type="OrthoDB" id="9765625at2"/>
<dbReference type="PhylomeDB" id="F9UST1"/>
<dbReference type="BioCyc" id="MetaCyc:MONOMER-20307"/>
<dbReference type="BRENDA" id="4.99.1.12">
    <property type="organism ID" value="2849"/>
</dbReference>
<dbReference type="Proteomes" id="UP000000432">
    <property type="component" value="Chromosome"/>
</dbReference>
<dbReference type="GO" id="GO:0016829">
    <property type="term" value="F:lyase activity"/>
    <property type="evidence" value="ECO:0007669"/>
    <property type="project" value="UniProtKB-UniRule"/>
</dbReference>
<dbReference type="GO" id="GO:0016151">
    <property type="term" value="F:nickel cation binding"/>
    <property type="evidence" value="ECO:0007669"/>
    <property type="project" value="UniProtKB-UniRule"/>
</dbReference>
<dbReference type="GO" id="GO:0051604">
    <property type="term" value="P:protein maturation"/>
    <property type="evidence" value="ECO:0007669"/>
    <property type="project" value="UniProtKB-UniRule"/>
</dbReference>
<dbReference type="GO" id="GO:0075523">
    <property type="term" value="P:viral translational frameshifting"/>
    <property type="evidence" value="ECO:0007669"/>
    <property type="project" value="UniProtKB-KW"/>
</dbReference>
<dbReference type="Gene3D" id="3.10.20.300">
    <property type="entry name" value="mk0293 like domain"/>
    <property type="match status" value="1"/>
</dbReference>
<dbReference type="Gene3D" id="3.30.70.1380">
    <property type="entry name" value="Transcriptional regulatory protein pf0864 domain like"/>
    <property type="match status" value="1"/>
</dbReference>
<dbReference type="HAMAP" id="MF_01074">
    <property type="entry name" value="LarC"/>
    <property type="match status" value="1"/>
</dbReference>
<dbReference type="InterPro" id="IPR002822">
    <property type="entry name" value="Ni_insertion"/>
</dbReference>
<dbReference type="NCBIfam" id="TIGR00299">
    <property type="entry name" value="nickel pincer cofactor biosynthesis protein LarC"/>
    <property type="match status" value="1"/>
</dbReference>
<dbReference type="PANTHER" id="PTHR36566">
    <property type="entry name" value="NICKEL INSERTION PROTEIN-RELATED"/>
    <property type="match status" value="1"/>
</dbReference>
<dbReference type="PANTHER" id="PTHR36566:SF1">
    <property type="entry name" value="PYRIDINIUM-3,5-BISTHIOCARBOXYLIC ACID MONONUCLEOTIDE NICKEL INSERTION PROTEIN"/>
    <property type="match status" value="1"/>
</dbReference>
<dbReference type="Pfam" id="PF01969">
    <property type="entry name" value="Ni_insertion"/>
    <property type="match status" value="1"/>
</dbReference>
<name>LARC_LACPL</name>
<accession>F9UST1</accession>
<accession>F9UST2</accession>
<feature type="chain" id="PRO_0000441654" description="Pyridinium-3,5-bisthiocarboxylic acid mononucleotide nickel insertion protein">
    <location>
        <begin position="1"/>
        <end position="420"/>
    </location>
</feature>
<feature type="splice variant" id="VSP_059080" description="In isoform 2." evidence="6">
    <original>KLSQQIVNRTADAVLMIEANLDDQTGEGLGYVMNQLLTAGAYDVFFTPIQMKKDRPATKLTVLGNVNDKDLLTKLILQETTTIGVRYQTWQRTIMQRHFLTVATPYGDVQVKVATYQDIEKKMPEYADCAQLAQQFHIPFRTVYQAALVAVDQLDEEA</original>
    <variation>N</variation>
    <location>
        <begin position="263"/>
        <end position="420"/>
    </location>
</feature>
<feature type="strand" evidence="10">
    <location>
        <begin position="273"/>
        <end position="285"/>
    </location>
</feature>
<feature type="helix" evidence="10">
    <location>
        <begin position="288"/>
        <end position="300"/>
    </location>
</feature>
<feature type="strand" evidence="10">
    <location>
        <begin position="304"/>
        <end position="313"/>
    </location>
</feature>
<feature type="turn" evidence="10">
    <location>
        <begin position="314"/>
        <end position="316"/>
    </location>
</feature>
<feature type="strand" evidence="10">
    <location>
        <begin position="317"/>
        <end position="326"/>
    </location>
</feature>
<feature type="helix" evidence="10">
    <location>
        <begin position="328"/>
        <end position="330"/>
    </location>
</feature>
<feature type="helix" evidence="10">
    <location>
        <begin position="331"/>
        <end position="341"/>
    </location>
</feature>
<feature type="strand" evidence="10">
    <location>
        <begin position="348"/>
        <end position="355"/>
    </location>
</feature>
<feature type="strand" evidence="10">
    <location>
        <begin position="358"/>
        <end position="366"/>
    </location>
</feature>
<feature type="strand" evidence="10">
    <location>
        <begin position="369"/>
        <end position="378"/>
    </location>
</feature>
<feature type="strand" evidence="10">
    <location>
        <begin position="381"/>
        <end position="386"/>
    </location>
</feature>
<feature type="helix" evidence="10">
    <location>
        <begin position="388"/>
        <end position="397"/>
    </location>
</feature>
<feature type="helix" evidence="10">
    <location>
        <begin position="402"/>
        <end position="412"/>
    </location>
</feature>
<gene>
    <name evidence="5" type="primary">larC</name>
    <name evidence="8 9" type="synonym">larC1/larC2</name>
    <name evidence="8 9" type="ordered locus">lp_0106/lp_0107</name>
</gene>
<sequence>MQTLYLDAFSGISGDMFLGALLDLGLDFEQLKTELAKLHVHGYELTQQREAQSSIYGTSFDVQVAGGKDHGFVEHHHHQHEAGHHHDHEARHLADIEALIDGSDLSDTVKHHAKAIFMEIAQAEAAVHHMPLAEVHFHEVGALDSIVDIVGCCIGLELMQIDTIMASPLSDGSGFINVAHGQMPVPVPAVMQMRVGSAIPIQQRLDVHTELITPTGMGLVKTLVREFGPLPENAVPTRVGYGFGKRDTGGFNALRAVLFEKKKLSQQIVNRTADAVLMIEANLDDQTGEGLGYVMNQLLTAGAYDVFFTPIQMKKDRPATKLTVLGNVNDKDLLTKLILQETTTIGVRYQTWQRTIMQRHFLTVATPYGDVQVKVATYQDIEKKMPEYADCAQLAQQFHIPFRTVYQAALVAVDQLDEEA</sequence>
<proteinExistence type="evidence at protein level"/>
<organism>
    <name type="scientific">Lactiplantibacillus plantarum (strain ATCC BAA-793 / NCIMB 8826 / WCFS1)</name>
    <name type="common">Lactobacillus plantarum</name>
    <dbReference type="NCBI Taxonomy" id="220668"/>
    <lineage>
        <taxon>Bacteria</taxon>
        <taxon>Bacillati</taxon>
        <taxon>Bacillota</taxon>
        <taxon>Bacilli</taxon>
        <taxon>Lactobacillales</taxon>
        <taxon>Lactobacillaceae</taxon>
        <taxon>Lactiplantibacillus</taxon>
    </lineage>
</organism>
<comment type="function">
    <text evidence="3 4">Involved in the biosynthesis of a nickel-pincer cofactor ((SCS)Ni(II) pincer complex). Binds Ni(2+), and functions in nickel delivery to pyridinium-3,5-bisthiocarboxylic acid mononucleotide (P2TMN), to form the mature cofactor. Is required for the activation of the lactate racemase LarA. May also be involved in the activation of other nickel-pincer cofactor-dependent enzymes.</text>
</comment>
<comment type="catalytic activity">
    <reaction evidence="3 4">
        <text>Ni(II)-pyridinium-3,5-bisthiocarboxylate mononucleotide = pyridinium-3,5-bisthiocarboxylate mononucleotide + Ni(2+)</text>
        <dbReference type="Rhea" id="RHEA:54784"/>
        <dbReference type="ChEBI" id="CHEBI:49786"/>
        <dbReference type="ChEBI" id="CHEBI:137372"/>
        <dbReference type="ChEBI" id="CHEBI:137373"/>
        <dbReference type="EC" id="4.99.1.12"/>
    </reaction>
</comment>
<comment type="alternative products">
    <event type="ribosomal frameshifting"/>
    <isoform>
        <id>F9UST1-1</id>
        <name>1</name>
        <sequence type="displayed"/>
    </isoform>
    <isoform>
        <id>F9UST1-2</id>
        <name>2</name>
        <sequence type="described" ref="VSP_059080"/>
    </isoform>
</comment>
<comment type="induction">
    <text evidence="2 3">Induced by L-lactate and repressed by D-lactate. Is thus regulated by the L-lactate/D-lactate ratio. Makes part of the lar operon (larABCDE).</text>
</comment>
<comment type="disruption phenotype">
    <text evidence="3">Deletion of this gene leads to a loss of lactate racemase activity.</text>
</comment>
<comment type="miscellaneous">
    <molecule>Isoform 1</molecule>
    <text evidence="3">Expression of the full-length LarC protein requires a -1 ribosomal frameshift to allow contiguous translation of larC1 and larC2 ORFs, leading to the functional form of the protein. The exact position of the frameshift cannot be determined but likely occurs in the stretch of 10 consecutive adenines present at the end of larC1.</text>
</comment>
<comment type="miscellaneous">
    <molecule>Isoform 2</molecule>
    <text evidence="3">Produced from conventional translation of the larC1 ORF. Expression of LarC1 alone does not show lactate racemase activity.</text>
</comment>
<comment type="similarity">
    <text evidence="1">Belongs to the LarC family.</text>
</comment>
<comment type="sequence caution" evidence="3">
    <conflict type="frameshift">
        <sequence resource="EMBL-CDS" id="CCC77662"/>
    </conflict>
    <text>The exact position of the ribosomal frameshift cannot be determined but likely occurs in the 10 consecutive adenines present at the end of larC1.</text>
</comment>
<comment type="sequence caution" evidence="3">
    <conflict type="frameshift">
        <sequence resource="EMBL-CDS" id="CCC77663"/>
    </conflict>
</comment>
<protein>
    <recommendedName>
        <fullName evidence="7">Pyridinium-3,5-bisthiocarboxylic acid mononucleotide nickel insertion protein</fullName>
        <shortName evidence="7">P2TMN nickel insertion protein</shortName>
        <ecNumber evidence="3 4">4.99.1.12</ecNumber>
    </recommendedName>
    <alternativeName>
        <fullName evidence="5">Lactate racemase accessory protein LarC</fullName>
    </alternativeName>
    <alternativeName>
        <fullName evidence="5">Lactate racemase activation protein LarC</fullName>
    </alternativeName>
    <alternativeName>
        <fullName evidence="5">Lactate racemase maturation protein LarC</fullName>
    </alternativeName>
    <alternativeName>
        <fullName evidence="5">Lactate racemization operon protein LarC</fullName>
    </alternativeName>
    <alternativeName>
        <fullName evidence="7">Nickel-pincer cofactor biosynthesis protein LarC</fullName>
    </alternativeName>
</protein>
<reference key="1">
    <citation type="journal article" date="2003" name="Proc. Natl. Acad. Sci. U.S.A.">
        <title>Complete genome sequence of Lactobacillus plantarum WCFS1.</title>
        <authorList>
            <person name="Kleerebezem M."/>
            <person name="Boekhorst J."/>
            <person name="van Kranenburg R."/>
            <person name="Molenaar D."/>
            <person name="Kuipers O.P."/>
            <person name="Leer R."/>
            <person name="Tarchini R."/>
            <person name="Peters S.A."/>
            <person name="Sandbrink H.M."/>
            <person name="Fiers M.W.E.J."/>
            <person name="Stiekema W."/>
            <person name="Klein Lankhorst R.M."/>
            <person name="Bron P.A."/>
            <person name="Hoffer S.M."/>
            <person name="Nierop Groot M.N."/>
            <person name="Kerkhoven R."/>
            <person name="De Vries M."/>
            <person name="Ursing B."/>
            <person name="De Vos W.M."/>
            <person name="Siezen R.J."/>
        </authorList>
    </citation>
    <scope>NUCLEOTIDE SEQUENCE [LARGE SCALE GENOMIC DNA]</scope>
    <source>
        <strain>ATCC BAA-793 / NCIMB 8826 / WCFS1</strain>
    </source>
</reference>
<reference key="2">
    <citation type="journal article" date="2012" name="J. Bacteriol.">
        <title>Complete resequencing and reannotation of the Lactobacillus plantarum WCFS1 genome.</title>
        <authorList>
            <person name="Siezen R.J."/>
            <person name="Francke C."/>
            <person name="Renckens B."/>
            <person name="Boekhorst J."/>
            <person name="Wels M."/>
            <person name="Kleerebezem M."/>
            <person name="van Hijum S.A."/>
        </authorList>
    </citation>
    <scope>NUCLEOTIDE SEQUENCE [LARGE SCALE GENOMIC DNA]</scope>
    <scope>GENOME REANNOTATION</scope>
    <source>
        <strain>ATCC BAA-793 / NCIMB 8826 / WCFS1</strain>
    </source>
</reference>
<reference key="3">
    <citation type="journal article" date="2005" name="J. Bacteriol.">
        <title>Lactate racemization as a rescue pathway for supplying D-lactate to the cell wall biosynthesis machinery in Lactobacillus plantarum.</title>
        <authorList>
            <person name="Goffin P."/>
            <person name="Deghorain M."/>
            <person name="Mainardi J.L."/>
            <person name="Tytgat I."/>
            <person name="Champomier-Verges M.C."/>
            <person name="Kleerebezem M."/>
            <person name="Hols P."/>
        </authorList>
    </citation>
    <scope>INDUCTION</scope>
    <source>
        <strain>ATCC BAA-793 / NCIMB 8826 / WCFS1</strain>
    </source>
</reference>
<reference key="4">
    <citation type="journal article" date="2014" name="Nat. Commun.">
        <title>Lactate racemase is a nickel-dependent enzyme activated by a widespread maturation system.</title>
        <authorList>
            <person name="Desguin B."/>
            <person name="Goffin P."/>
            <person name="Viaene E."/>
            <person name="Kleerebezem M."/>
            <person name="Martin-Diaconescu V."/>
            <person name="Maroney M.J."/>
            <person name="Declercq J.P."/>
            <person name="Soumillion P."/>
            <person name="Hols P."/>
        </authorList>
    </citation>
    <scope>RIBOSOMAL FRAMESHIFT</scope>
    <scope>FUNCTION</scope>
    <scope>CATALYTIC ACTIVITY</scope>
    <scope>NICKEL-BINDING</scope>
    <scope>INDUCTION</scope>
    <scope>DISRUPTION PHENOTYPE</scope>
    <source>
        <strain>ATCC BAA-793 / NCIMB 8826 / WCFS1</strain>
    </source>
</reference>
<reference key="5">
    <citation type="journal article" date="2016" name="Proc. Natl. Acad. Sci. U.S.A.">
        <title>Nickel-pincer cofactor biosynthesis involves LarB-catalyzed pyridinium carboxylation and LarE-dependent sacrificial sulfur insertion.</title>
        <authorList>
            <person name="Desguin B."/>
            <person name="Soumillion P."/>
            <person name="Hols P."/>
            <person name="Hausinger R.P."/>
        </authorList>
    </citation>
    <scope>FUNCTION</scope>
    <scope>CATALYTIC ACTIVITY</scope>
</reference>